<organism>
    <name type="scientific">Pectobacterium atrosepticum (strain SCRI 1043 / ATCC BAA-672)</name>
    <name type="common">Erwinia carotovora subsp. atroseptica</name>
    <dbReference type="NCBI Taxonomy" id="218491"/>
    <lineage>
        <taxon>Bacteria</taxon>
        <taxon>Pseudomonadati</taxon>
        <taxon>Pseudomonadota</taxon>
        <taxon>Gammaproteobacteria</taxon>
        <taxon>Enterobacterales</taxon>
        <taxon>Pectobacteriaceae</taxon>
        <taxon>Pectobacterium</taxon>
    </lineage>
</organism>
<keyword id="KW-0997">Cell inner membrane</keyword>
<keyword id="KW-1003">Cell membrane</keyword>
<keyword id="KW-0472">Membrane</keyword>
<keyword id="KW-1185">Reference proteome</keyword>
<keyword id="KW-0732">Signal</keyword>
<keyword id="KW-0813">Transport</keyword>
<name>MDTA_PECAS</name>
<accession>Q6D2B2</accession>
<proteinExistence type="inferred from homology"/>
<protein>
    <recommendedName>
        <fullName evidence="1">Multidrug resistance protein MdtA</fullName>
    </recommendedName>
    <alternativeName>
        <fullName evidence="1">Multidrug transporter MdtA</fullName>
    </alternativeName>
</protein>
<sequence>MNAKRIRGLLILAAVIAIAVLIWRHFTQTTPAAPGTSEQHAARTSHSENSGSGGGRRAAMRTLAPVQAALTQSASVPHYLSGLGTVTAANTVTLRSRVNGQLMALHFQEGQQVKVGDLLAEIDPRPFQVELTQAQGQLAKDQAALLNTRQDLARYQQLVKTNLISRQELDTQTAAVRQAEGALKADEGAVASAQLQLDYSKITAPISGRIGLKQVDVGNYITSGDTNGIVVITQTYPIDVVFTVPEAEISTILNAQKSGQPPVVEAWDRANQKKLSQGILLSMDNQIDTTTGTIKLKARFDNLDDALFPNQFVNIRMKVDTLKNAVVAPSAAVQMGNDGRFVWILNNKNEVSKRQVTTSIQYGQLVVVTAGLDADVQVVTDGIDRLTEGAKVEIVPSALTEKTPAIAGEKS</sequence>
<dbReference type="EMBL" id="BX950851">
    <property type="protein sequence ID" value="CAG76082.1"/>
    <property type="molecule type" value="Genomic_DNA"/>
</dbReference>
<dbReference type="RefSeq" id="WP_011094706.1">
    <property type="nucleotide sequence ID" value="NC_004547.2"/>
</dbReference>
<dbReference type="SMR" id="Q6D2B2"/>
<dbReference type="STRING" id="218491.ECA3184"/>
<dbReference type="KEGG" id="eca:ECA3184"/>
<dbReference type="PATRIC" id="fig|218491.5.peg.3225"/>
<dbReference type="eggNOG" id="COG0845">
    <property type="taxonomic scope" value="Bacteria"/>
</dbReference>
<dbReference type="HOGENOM" id="CLU_018816_2_0_6"/>
<dbReference type="OrthoDB" id="9783047at2"/>
<dbReference type="Proteomes" id="UP000007966">
    <property type="component" value="Chromosome"/>
</dbReference>
<dbReference type="GO" id="GO:1990281">
    <property type="term" value="C:efflux pump complex"/>
    <property type="evidence" value="ECO:0007669"/>
    <property type="project" value="TreeGrafter"/>
</dbReference>
<dbReference type="GO" id="GO:0005886">
    <property type="term" value="C:plasma membrane"/>
    <property type="evidence" value="ECO:0007669"/>
    <property type="project" value="UniProtKB-SubCell"/>
</dbReference>
<dbReference type="GO" id="GO:0015562">
    <property type="term" value="F:efflux transmembrane transporter activity"/>
    <property type="evidence" value="ECO:0007669"/>
    <property type="project" value="TreeGrafter"/>
</dbReference>
<dbReference type="FunFam" id="2.40.420.20:FF:000001">
    <property type="entry name" value="Efflux RND transporter periplasmic adaptor subunit"/>
    <property type="match status" value="1"/>
</dbReference>
<dbReference type="FunFam" id="1.10.287.470:FF:000005">
    <property type="entry name" value="Multidrug resistance protein MdtA"/>
    <property type="match status" value="1"/>
</dbReference>
<dbReference type="FunFam" id="2.40.30.170:FF:000006">
    <property type="entry name" value="Multidrug resistance protein MdtA"/>
    <property type="match status" value="1"/>
</dbReference>
<dbReference type="Gene3D" id="2.40.30.170">
    <property type="match status" value="1"/>
</dbReference>
<dbReference type="Gene3D" id="2.40.420.20">
    <property type="match status" value="1"/>
</dbReference>
<dbReference type="Gene3D" id="2.40.50.100">
    <property type="match status" value="1"/>
</dbReference>
<dbReference type="Gene3D" id="1.10.287.470">
    <property type="entry name" value="Helix hairpin bin"/>
    <property type="match status" value="1"/>
</dbReference>
<dbReference type="HAMAP" id="MF_01422">
    <property type="entry name" value="MdtA"/>
    <property type="match status" value="1"/>
</dbReference>
<dbReference type="InterPro" id="IPR032317">
    <property type="entry name" value="CusB_D23"/>
</dbReference>
<dbReference type="InterPro" id="IPR022824">
    <property type="entry name" value="Multidrug-R_MdtA"/>
</dbReference>
<dbReference type="InterPro" id="IPR006143">
    <property type="entry name" value="RND_pump_MFP"/>
</dbReference>
<dbReference type="NCBIfam" id="NF008589">
    <property type="entry name" value="PRK11556.1"/>
    <property type="match status" value="1"/>
</dbReference>
<dbReference type="NCBIfam" id="TIGR01730">
    <property type="entry name" value="RND_mfp"/>
    <property type="match status" value="1"/>
</dbReference>
<dbReference type="PANTHER" id="PTHR30469">
    <property type="entry name" value="MULTIDRUG RESISTANCE PROTEIN MDTA"/>
    <property type="match status" value="1"/>
</dbReference>
<dbReference type="PANTHER" id="PTHR30469:SF12">
    <property type="entry name" value="MULTIDRUG RESISTANCE PROTEIN MDTA"/>
    <property type="match status" value="1"/>
</dbReference>
<dbReference type="Pfam" id="PF16576">
    <property type="entry name" value="HlyD_D23"/>
    <property type="match status" value="1"/>
</dbReference>
<dbReference type="SUPFAM" id="SSF111369">
    <property type="entry name" value="HlyD-like secretion proteins"/>
    <property type="match status" value="1"/>
</dbReference>
<gene>
    <name evidence="1" type="primary">mdtA</name>
    <name type="ordered locus">ECA3184</name>
</gene>
<feature type="signal peptide" evidence="1">
    <location>
        <begin position="1"/>
        <end position="19"/>
    </location>
</feature>
<feature type="chain" id="PRO_0000018702" description="Multidrug resistance protein MdtA">
    <location>
        <begin position="20"/>
        <end position="411"/>
    </location>
</feature>
<feature type="region of interest" description="Disordered" evidence="2">
    <location>
        <begin position="31"/>
        <end position="58"/>
    </location>
</feature>
<feature type="compositionally biased region" description="Polar residues" evidence="2">
    <location>
        <begin position="31"/>
        <end position="49"/>
    </location>
</feature>
<reference key="1">
    <citation type="journal article" date="2004" name="Proc. Natl. Acad. Sci. U.S.A.">
        <title>Genome sequence of the enterobacterial phytopathogen Erwinia carotovora subsp. atroseptica and characterization of virulence factors.</title>
        <authorList>
            <person name="Bell K.S."/>
            <person name="Sebaihia M."/>
            <person name="Pritchard L."/>
            <person name="Holden M.T.G."/>
            <person name="Hyman L.J."/>
            <person name="Holeva M.C."/>
            <person name="Thomson N.R."/>
            <person name="Bentley S.D."/>
            <person name="Churcher L.J.C."/>
            <person name="Mungall K."/>
            <person name="Atkin R."/>
            <person name="Bason N."/>
            <person name="Brooks K."/>
            <person name="Chillingworth T."/>
            <person name="Clark K."/>
            <person name="Doggett J."/>
            <person name="Fraser A."/>
            <person name="Hance Z."/>
            <person name="Hauser H."/>
            <person name="Jagels K."/>
            <person name="Moule S."/>
            <person name="Norbertczak H."/>
            <person name="Ormond D."/>
            <person name="Price C."/>
            <person name="Quail M.A."/>
            <person name="Sanders M."/>
            <person name="Walker D."/>
            <person name="Whitehead S."/>
            <person name="Salmond G.P.C."/>
            <person name="Birch P.R.J."/>
            <person name="Parkhill J."/>
            <person name="Toth I.K."/>
        </authorList>
    </citation>
    <scope>NUCLEOTIDE SEQUENCE [LARGE SCALE GENOMIC DNA]</scope>
    <source>
        <strain>SCRI 1043 / ATCC BAA-672</strain>
    </source>
</reference>
<comment type="subunit">
    <text evidence="1">Part of a tripartite efflux system composed of MdtA, MdtB and MdtC.</text>
</comment>
<comment type="subcellular location">
    <subcellularLocation>
        <location evidence="1">Cell inner membrane</location>
        <topology evidence="1">Peripheral membrane protein</topology>
    </subcellularLocation>
</comment>
<comment type="similarity">
    <text evidence="1">Belongs to the membrane fusion protein (MFP) (TC 8.A.1) family.</text>
</comment>
<evidence type="ECO:0000255" key="1">
    <source>
        <dbReference type="HAMAP-Rule" id="MF_01422"/>
    </source>
</evidence>
<evidence type="ECO:0000256" key="2">
    <source>
        <dbReference type="SAM" id="MobiDB-lite"/>
    </source>
</evidence>